<reference key="1">
    <citation type="journal article" date="1996" name="Mol. Gen. Genet.">
        <title>The G protein beta subunit Gpb1 of Schizosaccharomyces pombe is a negative regulator of sexual development.</title>
        <authorList>
            <person name="Kim D.U."/>
            <person name="Park S.K."/>
            <person name="Chung K.S."/>
            <person name="Choi M.U."/>
            <person name="Yoo H.S."/>
        </authorList>
    </citation>
    <scope>NUCLEOTIDE SEQUENCE [GENOMIC DNA]</scope>
</reference>
<reference key="2">
    <citation type="journal article" date="2000" name="Genetics">
        <title>The fission yeast git5 gene encodes a gbeta subunit required for glucose-triggered adenylate cyclase activation.</title>
        <authorList>
            <person name="Landry S."/>
            <person name="Pettit M.T."/>
            <person name="Apolinario E."/>
            <person name="Hoffman C.S."/>
        </authorList>
    </citation>
    <scope>NUCLEOTIDE SEQUENCE [GENOMIC DNA]</scope>
</reference>
<reference key="3">
    <citation type="journal article" date="2000" name="Yeast">
        <title>A 38 kb segment containing the cdc2 gene from the left arm of fission yeast chromosome II: sequence analysis and characterization of the genomic DNA and cDNAs encoded on the segment.</title>
        <authorList>
            <person name="Machida M."/>
            <person name="Yamazaki S."/>
            <person name="Kunihiro S."/>
            <person name="Tanaka T."/>
            <person name="Kushida N."/>
            <person name="Jinno K."/>
            <person name="Haikawa Y."/>
            <person name="Yamazaki J."/>
            <person name="Yamamoto S."/>
            <person name="Sekine M."/>
            <person name="Oguchi A."/>
            <person name="Nagai Y."/>
            <person name="Sakai M."/>
            <person name="Aoki K."/>
            <person name="Ogura K."/>
            <person name="Kudoh Y."/>
            <person name="Kikuchi H."/>
            <person name="Zhang M.Q."/>
            <person name="Yanagida M."/>
        </authorList>
    </citation>
    <scope>NUCLEOTIDE SEQUENCE [LARGE SCALE GENOMIC DNA]</scope>
    <source>
        <strain>972 / ATCC 24843</strain>
    </source>
</reference>
<reference key="4">
    <citation type="journal article" date="2002" name="Nature">
        <title>The genome sequence of Schizosaccharomyces pombe.</title>
        <authorList>
            <person name="Wood V."/>
            <person name="Gwilliam R."/>
            <person name="Rajandream M.A."/>
            <person name="Lyne M.H."/>
            <person name="Lyne R."/>
            <person name="Stewart A."/>
            <person name="Sgouros J.G."/>
            <person name="Peat N."/>
            <person name="Hayles J."/>
            <person name="Baker S.G."/>
            <person name="Basham D."/>
            <person name="Bowman S."/>
            <person name="Brooks K."/>
            <person name="Brown D."/>
            <person name="Brown S."/>
            <person name="Chillingworth T."/>
            <person name="Churcher C.M."/>
            <person name="Collins M."/>
            <person name="Connor R."/>
            <person name="Cronin A."/>
            <person name="Davis P."/>
            <person name="Feltwell T."/>
            <person name="Fraser A."/>
            <person name="Gentles S."/>
            <person name="Goble A."/>
            <person name="Hamlin N."/>
            <person name="Harris D.E."/>
            <person name="Hidalgo J."/>
            <person name="Hodgson G."/>
            <person name="Holroyd S."/>
            <person name="Hornsby T."/>
            <person name="Howarth S."/>
            <person name="Huckle E.J."/>
            <person name="Hunt S."/>
            <person name="Jagels K."/>
            <person name="James K.D."/>
            <person name="Jones L."/>
            <person name="Jones M."/>
            <person name="Leather S."/>
            <person name="McDonald S."/>
            <person name="McLean J."/>
            <person name="Mooney P."/>
            <person name="Moule S."/>
            <person name="Mungall K.L."/>
            <person name="Murphy L.D."/>
            <person name="Niblett D."/>
            <person name="Odell C."/>
            <person name="Oliver K."/>
            <person name="O'Neil S."/>
            <person name="Pearson D."/>
            <person name="Quail M.A."/>
            <person name="Rabbinowitsch E."/>
            <person name="Rutherford K.M."/>
            <person name="Rutter S."/>
            <person name="Saunders D."/>
            <person name="Seeger K."/>
            <person name="Sharp S."/>
            <person name="Skelton J."/>
            <person name="Simmonds M.N."/>
            <person name="Squares R."/>
            <person name="Squares S."/>
            <person name="Stevens K."/>
            <person name="Taylor K."/>
            <person name="Taylor R.G."/>
            <person name="Tivey A."/>
            <person name="Walsh S.V."/>
            <person name="Warren T."/>
            <person name="Whitehead S."/>
            <person name="Woodward J.R."/>
            <person name="Volckaert G."/>
            <person name="Aert R."/>
            <person name="Robben J."/>
            <person name="Grymonprez B."/>
            <person name="Weltjens I."/>
            <person name="Vanstreels E."/>
            <person name="Rieger M."/>
            <person name="Schaefer M."/>
            <person name="Mueller-Auer S."/>
            <person name="Gabel C."/>
            <person name="Fuchs M."/>
            <person name="Duesterhoeft A."/>
            <person name="Fritzc C."/>
            <person name="Holzer E."/>
            <person name="Moestl D."/>
            <person name="Hilbert H."/>
            <person name="Borzym K."/>
            <person name="Langer I."/>
            <person name="Beck A."/>
            <person name="Lehrach H."/>
            <person name="Reinhardt R."/>
            <person name="Pohl T.M."/>
            <person name="Eger P."/>
            <person name="Zimmermann W."/>
            <person name="Wedler H."/>
            <person name="Wambutt R."/>
            <person name="Purnelle B."/>
            <person name="Goffeau A."/>
            <person name="Cadieu E."/>
            <person name="Dreano S."/>
            <person name="Gloux S."/>
            <person name="Lelaure V."/>
            <person name="Mottier S."/>
            <person name="Galibert F."/>
            <person name="Aves S.J."/>
            <person name="Xiang Z."/>
            <person name="Hunt C."/>
            <person name="Moore K."/>
            <person name="Hurst S.M."/>
            <person name="Lucas M."/>
            <person name="Rochet M."/>
            <person name="Gaillardin C."/>
            <person name="Tallada V.A."/>
            <person name="Garzon A."/>
            <person name="Thode G."/>
            <person name="Daga R.R."/>
            <person name="Cruzado L."/>
            <person name="Jimenez J."/>
            <person name="Sanchez M."/>
            <person name="del Rey F."/>
            <person name="Benito J."/>
            <person name="Dominguez A."/>
            <person name="Revuelta J.L."/>
            <person name="Moreno S."/>
            <person name="Armstrong J."/>
            <person name="Forsburg S.L."/>
            <person name="Cerutti L."/>
            <person name="Lowe T."/>
            <person name="McCombie W.R."/>
            <person name="Paulsen I."/>
            <person name="Potashkin J."/>
            <person name="Shpakovski G.V."/>
            <person name="Ussery D."/>
            <person name="Barrell B.G."/>
            <person name="Nurse P."/>
        </authorList>
    </citation>
    <scope>NUCLEOTIDE SEQUENCE [LARGE SCALE GENOMIC DNA]</scope>
    <source>
        <strain>972 / ATCC 24843</strain>
    </source>
</reference>
<reference key="5">
    <citation type="journal article" date="2000" name="Genetics">
        <title>Glucose monitoring in fission yeast via the gpa2 Galpha, the git5 Gbeta and the git3 putative glucose receptor.</title>
        <authorList>
            <person name="Welton R.M."/>
            <person name="Hoffman C.S."/>
        </authorList>
    </citation>
    <scope>FUNCTION</scope>
</reference>
<reference key="6">
    <citation type="journal article" date="2001" name="Genetics">
        <title>The git5 Gbeta and git11 Ggamma form an atypical Gbetagamma dimer acting in the fission yeast glucose/cAMP pathway.</title>
        <authorList>
            <person name="Landry S."/>
            <person name="Hoffman C.S."/>
        </authorList>
    </citation>
    <scope>FUNCTION</scope>
    <scope>SUBUNIT</scope>
    <scope>SUBCELLULAR LOCATION</scope>
    <scope>DISRUPTION PHENOTYPE</scope>
</reference>
<reference key="7">
    <citation type="journal article" date="2006" name="Fungal Genet. Biol.">
        <title>Identification of Gnr1p, a negative regulator of G alpha signalling in Schizosaccharomyces pombe, and its complementation by human G beta subunits.</title>
        <authorList>
            <person name="Goddard A."/>
            <person name="Ladds G."/>
            <person name="Forfar R."/>
            <person name="Davey J."/>
        </authorList>
    </citation>
    <scope>FUNCTION</scope>
</reference>
<reference key="8">
    <citation type="journal article" date="2006" name="Nat. Biotechnol.">
        <title>ORFeome cloning and global analysis of protein localization in the fission yeast Schizosaccharomyces pombe.</title>
        <authorList>
            <person name="Matsuyama A."/>
            <person name="Arai R."/>
            <person name="Yashiroda Y."/>
            <person name="Shirai A."/>
            <person name="Kamata A."/>
            <person name="Sekido S."/>
            <person name="Kobayashi Y."/>
            <person name="Hashimoto A."/>
            <person name="Hamamoto M."/>
            <person name="Hiraoka Y."/>
            <person name="Horinouchi S."/>
            <person name="Yoshida M."/>
        </authorList>
    </citation>
    <scope>SUBCELLULAR LOCATION [LARGE SCALE ANALYSIS]</scope>
</reference>
<reference key="9">
    <citation type="journal article" date="2010" name="Eukaryot. Cell">
        <title>Activated alleles of the Schizosaccharomyces pombe gpa2+ Galpha gene identify residues involved in GDP-GTP exchange.</title>
        <authorList>
            <person name="Ivey F.D."/>
            <person name="Taglia F.X."/>
            <person name="Yang F."/>
            <person name="Lander M.M."/>
            <person name="Kelly D.A."/>
            <person name="Hoffman C.S."/>
        </authorList>
    </citation>
    <scope>FUNCTION</scope>
    <scope>SUBUNIT</scope>
</reference>
<gene>
    <name type="primary">git5</name>
    <name type="synonym">gpb1</name>
    <name type="ORF">pi017</name>
    <name type="ORF">SPBC32H8.07</name>
</gene>
<comment type="function">
    <text evidence="1 2 4 5">Beta subunit of the heterotrimeric guanine nucleotide-binding protein (G protein) involved in glucose-induced cAMP signaling (PubMed:11014802, PubMed:11238401). The beta-gamma subunits (git5-git11) promote binding of the alpha subunit gpa2 to GPCR git3, which senses extracellular glucose, to activate cAMP-PKA signaling and repress sexual development and gluconeogenesis (PubMed:11014802, PubMed:16884933, PubMed:20139237).</text>
</comment>
<comment type="subunit">
    <text evidence="2 5">G proteins are composed of 3 units, alpha, beta and gamma (PubMed:11238401). Binding of the beta-gamma subunit complex (git5-git11) to the alpha subunit (gpa2) facilitates interaction with GPCR git3 (PubMed:11238401, PubMed:20139237).</text>
</comment>
<comment type="subcellular location">
    <subcellularLocation>
        <location evidence="7">Cell membrane</location>
        <topology evidence="7">Peripheral membrane protein</topology>
        <orientation evidence="7">Cytoplasmic side</orientation>
    </subcellularLocation>
    <subcellularLocation>
        <location evidence="3">Cytoplasm</location>
    </subcellularLocation>
    <subcellularLocation>
        <location evidence="3">Nucleus</location>
    </subcellularLocation>
</comment>
<comment type="disruption phenotype">
    <text evidence="2">Leads to starvation-independent sexual development; the effect is suppressed by cAMP.</text>
</comment>
<comment type="similarity">
    <text evidence="6">Belongs to the WD repeat G protein beta family.</text>
</comment>
<comment type="sequence caution" evidence="6">
    <conflict type="erroneous initiation">
        <sequence resource="EMBL-CDS" id="AAC37501"/>
    </conflict>
</comment>
<dbReference type="EMBL" id="L28061">
    <property type="protein sequence ID" value="AAC37501.1"/>
    <property type="status" value="ALT_INIT"/>
    <property type="molecule type" value="Genomic_DNA"/>
</dbReference>
<dbReference type="EMBL" id="AF092102">
    <property type="protein sequence ID" value="AAD09020.1"/>
    <property type="molecule type" value="Genomic_DNA"/>
</dbReference>
<dbReference type="EMBL" id="AB004535">
    <property type="protein sequence ID" value="BAA21396.1"/>
    <property type="molecule type" value="Genomic_DNA"/>
</dbReference>
<dbReference type="EMBL" id="CU329671">
    <property type="protein sequence ID" value="CAC37497.1"/>
    <property type="molecule type" value="Genomic_DNA"/>
</dbReference>
<dbReference type="PIR" id="S72457">
    <property type="entry name" value="S72457"/>
</dbReference>
<dbReference type="PIR" id="T50474">
    <property type="entry name" value="T50474"/>
</dbReference>
<dbReference type="RefSeq" id="NP_595613.1">
    <property type="nucleotide sequence ID" value="NM_001021508.2"/>
</dbReference>
<dbReference type="SMR" id="Q10282"/>
<dbReference type="BioGRID" id="276518">
    <property type="interactions" value="106"/>
</dbReference>
<dbReference type="FunCoup" id="Q10282">
    <property type="interactions" value="130"/>
</dbReference>
<dbReference type="STRING" id="284812.Q10282"/>
<dbReference type="PaxDb" id="4896-SPBC32H8.07.1"/>
<dbReference type="EnsemblFungi" id="SPBC32H8.07.1">
    <property type="protein sequence ID" value="SPBC32H8.07.1:pep"/>
    <property type="gene ID" value="SPBC32H8.07"/>
</dbReference>
<dbReference type="GeneID" id="2539974"/>
<dbReference type="KEGG" id="spo:2539974"/>
<dbReference type="PomBase" id="SPBC32H8.07">
    <property type="gene designation" value="git5"/>
</dbReference>
<dbReference type="VEuPathDB" id="FungiDB:SPBC32H8.07"/>
<dbReference type="eggNOG" id="KOG0286">
    <property type="taxonomic scope" value="Eukaryota"/>
</dbReference>
<dbReference type="HOGENOM" id="CLU_000288_57_34_1"/>
<dbReference type="InParanoid" id="Q10282"/>
<dbReference type="OMA" id="PLDSQWV"/>
<dbReference type="PhylomeDB" id="Q10282"/>
<dbReference type="Reactome" id="R-SPO-6814122">
    <property type="pathway name" value="Cooperation of PDCL (PhLP1) and TRiC/CCT in G-protein beta folding"/>
</dbReference>
<dbReference type="PRO" id="PR:Q10282"/>
<dbReference type="Proteomes" id="UP000002485">
    <property type="component" value="Chromosome II"/>
</dbReference>
<dbReference type="GO" id="GO:0005737">
    <property type="term" value="C:cytoplasm"/>
    <property type="evidence" value="ECO:0000318"/>
    <property type="project" value="GO_Central"/>
</dbReference>
<dbReference type="GO" id="GO:0005829">
    <property type="term" value="C:cytosol"/>
    <property type="evidence" value="ECO:0007005"/>
    <property type="project" value="PomBase"/>
</dbReference>
<dbReference type="GO" id="GO:0005834">
    <property type="term" value="C:heterotrimeric G-protein complex"/>
    <property type="evidence" value="ECO:0000314"/>
    <property type="project" value="PomBase"/>
</dbReference>
<dbReference type="GO" id="GO:0005634">
    <property type="term" value="C:nucleus"/>
    <property type="evidence" value="ECO:0007005"/>
    <property type="project" value="PomBase"/>
</dbReference>
<dbReference type="GO" id="GO:0030159">
    <property type="term" value="F:signaling receptor complex adaptor activity"/>
    <property type="evidence" value="ECO:0000314"/>
    <property type="project" value="PomBase"/>
</dbReference>
<dbReference type="GO" id="GO:0010619">
    <property type="term" value="P:adenylate cyclase-activating glucose-activated G protein-coupled receptor signaling pathway"/>
    <property type="evidence" value="ECO:0000315"/>
    <property type="project" value="PomBase"/>
</dbReference>
<dbReference type="GO" id="GO:0007186">
    <property type="term" value="P:G protein-coupled receptor signaling pathway"/>
    <property type="evidence" value="ECO:0000318"/>
    <property type="project" value="GO_Central"/>
</dbReference>
<dbReference type="GO" id="GO:0010515">
    <property type="term" value="P:negative regulation of induction of conjugation with cellular fusion"/>
    <property type="evidence" value="ECO:0000315"/>
    <property type="project" value="PomBase"/>
</dbReference>
<dbReference type="GO" id="GO:0000122">
    <property type="term" value="P:negative regulation of transcription by RNA polymerase II"/>
    <property type="evidence" value="ECO:0000315"/>
    <property type="project" value="PomBase"/>
</dbReference>
<dbReference type="GO" id="GO:0030435">
    <property type="term" value="P:sporulation resulting in formation of a cellular spore"/>
    <property type="evidence" value="ECO:0007669"/>
    <property type="project" value="UniProtKB-KW"/>
</dbReference>
<dbReference type="CDD" id="cd00200">
    <property type="entry name" value="WD40"/>
    <property type="match status" value="1"/>
</dbReference>
<dbReference type="FunFam" id="2.130.10.10:FF:000580">
    <property type="entry name" value="Guanine nucleotide-binding protein subunit beta"/>
    <property type="match status" value="1"/>
</dbReference>
<dbReference type="Gene3D" id="2.130.10.10">
    <property type="entry name" value="YVTN repeat-like/Quinoprotein amine dehydrogenase"/>
    <property type="match status" value="1"/>
</dbReference>
<dbReference type="InterPro" id="IPR020472">
    <property type="entry name" value="G-protein_beta_WD-40_rep"/>
</dbReference>
<dbReference type="InterPro" id="IPR001632">
    <property type="entry name" value="Gprotein_B"/>
</dbReference>
<dbReference type="InterPro" id="IPR016346">
    <property type="entry name" value="Guanine_nucleotide-bd_bsu"/>
</dbReference>
<dbReference type="InterPro" id="IPR015943">
    <property type="entry name" value="WD40/YVTN_repeat-like_dom_sf"/>
</dbReference>
<dbReference type="InterPro" id="IPR019775">
    <property type="entry name" value="WD40_repeat_CS"/>
</dbReference>
<dbReference type="InterPro" id="IPR036322">
    <property type="entry name" value="WD40_repeat_dom_sf"/>
</dbReference>
<dbReference type="InterPro" id="IPR001680">
    <property type="entry name" value="WD40_rpt"/>
</dbReference>
<dbReference type="PANTHER" id="PTHR19850">
    <property type="entry name" value="GUANINE NUCLEOTIDE-BINDING PROTEIN BETA G PROTEIN BETA"/>
    <property type="match status" value="1"/>
</dbReference>
<dbReference type="Pfam" id="PF25391">
    <property type="entry name" value="WD40_Gbeta"/>
    <property type="match status" value="1"/>
</dbReference>
<dbReference type="PIRSF" id="PIRSF002394">
    <property type="entry name" value="GN-bd_beta"/>
    <property type="match status" value="1"/>
</dbReference>
<dbReference type="PRINTS" id="PR00319">
    <property type="entry name" value="GPROTEINB"/>
</dbReference>
<dbReference type="PRINTS" id="PR00320">
    <property type="entry name" value="GPROTEINBRPT"/>
</dbReference>
<dbReference type="SMART" id="SM00320">
    <property type="entry name" value="WD40"/>
    <property type="match status" value="7"/>
</dbReference>
<dbReference type="SUPFAM" id="SSF50978">
    <property type="entry name" value="WD40 repeat-like"/>
    <property type="match status" value="1"/>
</dbReference>
<dbReference type="PROSITE" id="PS00678">
    <property type="entry name" value="WD_REPEATS_1"/>
    <property type="match status" value="2"/>
</dbReference>
<dbReference type="PROSITE" id="PS50082">
    <property type="entry name" value="WD_REPEATS_2"/>
    <property type="match status" value="5"/>
</dbReference>
<dbReference type="PROSITE" id="PS50294">
    <property type="entry name" value="WD_REPEATS_REGION"/>
    <property type="match status" value="1"/>
</dbReference>
<sequence length="305" mass="32828">MDSGSRVNVNIQGTRVLKNKLGKIPDIDISTDGKYLLSASTNDVLLVWDLHTSNKVAFFEAPSVWIMTCAFSPSTKSIAAGGLNNFCVVYDTSVPDADPVELVGHAGFVSCCKYVDDGHLLTGSGDKTCMFWDIEQAKAISVLKGHEMDIVSLDFLPSNPNLFVTGGCDKLAKLWDLRAAYCCATFPGNTSDINSISFFPSNADFVTGAEDGIARCFDIRASAEIFQYSSPSSSPINSVLFSKSGKLLFIAKDKTCEVWDSISSKTITSLTGHENRISSLALTSDGTMLATGSWDECVRLWSSSG</sequence>
<feature type="chain" id="PRO_0000127719" description="Guanine nucleotide-binding protein subunit beta">
    <location>
        <begin position="1"/>
        <end position="305"/>
    </location>
</feature>
<feature type="repeat" description="WD 1">
    <location>
        <begin position="19"/>
        <end position="49"/>
    </location>
</feature>
<feature type="repeat" description="WD 2">
    <location>
        <begin position="61"/>
        <end position="91"/>
    </location>
</feature>
<feature type="repeat" description="WD 3">
    <location>
        <begin position="104"/>
        <end position="133"/>
    </location>
</feature>
<feature type="repeat" description="WD 4">
    <location>
        <begin position="145"/>
        <end position="176"/>
    </location>
</feature>
<feature type="repeat" description="WD 5">
    <location>
        <begin position="188"/>
        <end position="218"/>
    </location>
</feature>
<feature type="repeat" description="WD 6">
    <location>
        <begin position="231"/>
        <end position="260"/>
    </location>
</feature>
<feature type="repeat" description="WD 7">
    <location>
        <begin position="272"/>
        <end position="302"/>
    </location>
</feature>
<organism>
    <name type="scientific">Schizosaccharomyces pombe (strain 972 / ATCC 24843)</name>
    <name type="common">Fission yeast</name>
    <dbReference type="NCBI Taxonomy" id="284812"/>
    <lineage>
        <taxon>Eukaryota</taxon>
        <taxon>Fungi</taxon>
        <taxon>Dikarya</taxon>
        <taxon>Ascomycota</taxon>
        <taxon>Taphrinomycotina</taxon>
        <taxon>Schizosaccharomycetes</taxon>
        <taxon>Schizosaccharomycetales</taxon>
        <taxon>Schizosaccharomycetaceae</taxon>
        <taxon>Schizosaccharomyces</taxon>
    </lineage>
</organism>
<name>GBB_SCHPO</name>
<proteinExistence type="evidence at protein level"/>
<protein>
    <recommendedName>
        <fullName>Guanine nucleotide-binding protein subunit beta</fullName>
    </recommendedName>
</protein>
<evidence type="ECO:0000269" key="1">
    <source>
    </source>
</evidence>
<evidence type="ECO:0000269" key="2">
    <source>
    </source>
</evidence>
<evidence type="ECO:0000269" key="3">
    <source>
    </source>
</evidence>
<evidence type="ECO:0000269" key="4">
    <source>
    </source>
</evidence>
<evidence type="ECO:0000269" key="5">
    <source>
    </source>
</evidence>
<evidence type="ECO:0000305" key="6"/>
<evidence type="ECO:0000305" key="7">
    <source>
    </source>
</evidence>
<accession>Q10282</accession>
<keyword id="KW-1003">Cell membrane</keyword>
<keyword id="KW-0963">Cytoplasm</keyword>
<keyword id="KW-0472">Membrane</keyword>
<keyword id="KW-0539">Nucleus</keyword>
<keyword id="KW-1185">Reference proteome</keyword>
<keyword id="KW-0677">Repeat</keyword>
<keyword id="KW-0749">Sporulation</keyword>
<keyword id="KW-0807">Transducer</keyword>
<keyword id="KW-0853">WD repeat</keyword>